<proteinExistence type="inferred from homology"/>
<name>SYL_BURO1</name>
<dbReference type="EC" id="6.1.1.4" evidence="1"/>
<dbReference type="EMBL" id="CP000378">
    <property type="protein sequence ID" value="ABF75085.1"/>
    <property type="molecule type" value="Genomic_DNA"/>
</dbReference>
<dbReference type="SMR" id="Q1BZ70"/>
<dbReference type="HOGENOM" id="CLU_004427_0_0_4"/>
<dbReference type="GO" id="GO:0005829">
    <property type="term" value="C:cytosol"/>
    <property type="evidence" value="ECO:0007669"/>
    <property type="project" value="TreeGrafter"/>
</dbReference>
<dbReference type="GO" id="GO:0002161">
    <property type="term" value="F:aminoacyl-tRNA deacylase activity"/>
    <property type="evidence" value="ECO:0007669"/>
    <property type="project" value="InterPro"/>
</dbReference>
<dbReference type="GO" id="GO:0005524">
    <property type="term" value="F:ATP binding"/>
    <property type="evidence" value="ECO:0007669"/>
    <property type="project" value="UniProtKB-UniRule"/>
</dbReference>
<dbReference type="GO" id="GO:0004823">
    <property type="term" value="F:leucine-tRNA ligase activity"/>
    <property type="evidence" value="ECO:0007669"/>
    <property type="project" value="UniProtKB-UniRule"/>
</dbReference>
<dbReference type="GO" id="GO:0006429">
    <property type="term" value="P:leucyl-tRNA aminoacylation"/>
    <property type="evidence" value="ECO:0007669"/>
    <property type="project" value="UniProtKB-UniRule"/>
</dbReference>
<dbReference type="CDD" id="cd07958">
    <property type="entry name" value="Anticodon_Ia_Leu_BEm"/>
    <property type="match status" value="1"/>
</dbReference>
<dbReference type="CDD" id="cd00812">
    <property type="entry name" value="LeuRS_core"/>
    <property type="match status" value="1"/>
</dbReference>
<dbReference type="FunFam" id="1.10.730.10:FF:000002">
    <property type="entry name" value="Leucine--tRNA ligase"/>
    <property type="match status" value="1"/>
</dbReference>
<dbReference type="FunFam" id="2.20.28.290:FF:000001">
    <property type="entry name" value="Leucine--tRNA ligase"/>
    <property type="match status" value="1"/>
</dbReference>
<dbReference type="FunFam" id="3.10.20.590:FF:000001">
    <property type="entry name" value="Leucine--tRNA ligase"/>
    <property type="match status" value="1"/>
</dbReference>
<dbReference type="FunFam" id="3.40.50.620:FF:000003">
    <property type="entry name" value="Leucine--tRNA ligase"/>
    <property type="match status" value="1"/>
</dbReference>
<dbReference type="FunFam" id="3.40.50.620:FF:000056">
    <property type="entry name" value="Leucine--tRNA ligase"/>
    <property type="match status" value="1"/>
</dbReference>
<dbReference type="FunFam" id="3.90.740.10:FF:000012">
    <property type="entry name" value="Leucine--tRNA ligase"/>
    <property type="match status" value="1"/>
</dbReference>
<dbReference type="Gene3D" id="2.20.28.290">
    <property type="match status" value="1"/>
</dbReference>
<dbReference type="Gene3D" id="3.10.20.590">
    <property type="match status" value="1"/>
</dbReference>
<dbReference type="Gene3D" id="3.40.50.620">
    <property type="entry name" value="HUPs"/>
    <property type="match status" value="2"/>
</dbReference>
<dbReference type="Gene3D" id="1.10.730.10">
    <property type="entry name" value="Isoleucyl-tRNA Synthetase, Domain 1"/>
    <property type="match status" value="2"/>
</dbReference>
<dbReference type="HAMAP" id="MF_00049_B">
    <property type="entry name" value="Leu_tRNA_synth_B"/>
    <property type="match status" value="1"/>
</dbReference>
<dbReference type="InterPro" id="IPR001412">
    <property type="entry name" value="aa-tRNA-synth_I_CS"/>
</dbReference>
<dbReference type="InterPro" id="IPR002300">
    <property type="entry name" value="aa-tRNA-synth_Ia"/>
</dbReference>
<dbReference type="InterPro" id="IPR002302">
    <property type="entry name" value="Leu-tRNA-ligase"/>
</dbReference>
<dbReference type="InterPro" id="IPR025709">
    <property type="entry name" value="Leu_tRNA-synth_edit"/>
</dbReference>
<dbReference type="InterPro" id="IPR013155">
    <property type="entry name" value="M/V/L/I-tRNA-synth_anticd-bd"/>
</dbReference>
<dbReference type="InterPro" id="IPR015413">
    <property type="entry name" value="Methionyl/Leucyl_tRNA_Synth"/>
</dbReference>
<dbReference type="InterPro" id="IPR014729">
    <property type="entry name" value="Rossmann-like_a/b/a_fold"/>
</dbReference>
<dbReference type="InterPro" id="IPR009080">
    <property type="entry name" value="tRNAsynth_Ia_anticodon-bd"/>
</dbReference>
<dbReference type="InterPro" id="IPR009008">
    <property type="entry name" value="Val/Leu/Ile-tRNA-synth_edit"/>
</dbReference>
<dbReference type="NCBIfam" id="TIGR00396">
    <property type="entry name" value="leuS_bact"/>
    <property type="match status" value="1"/>
</dbReference>
<dbReference type="PANTHER" id="PTHR43740:SF2">
    <property type="entry name" value="LEUCINE--TRNA LIGASE, MITOCHONDRIAL"/>
    <property type="match status" value="1"/>
</dbReference>
<dbReference type="PANTHER" id="PTHR43740">
    <property type="entry name" value="LEUCYL-TRNA SYNTHETASE"/>
    <property type="match status" value="1"/>
</dbReference>
<dbReference type="Pfam" id="PF08264">
    <property type="entry name" value="Anticodon_1"/>
    <property type="match status" value="1"/>
</dbReference>
<dbReference type="Pfam" id="PF00133">
    <property type="entry name" value="tRNA-synt_1"/>
    <property type="match status" value="2"/>
</dbReference>
<dbReference type="Pfam" id="PF13603">
    <property type="entry name" value="tRNA-synt_1_2"/>
    <property type="match status" value="1"/>
</dbReference>
<dbReference type="Pfam" id="PF09334">
    <property type="entry name" value="tRNA-synt_1g"/>
    <property type="match status" value="1"/>
</dbReference>
<dbReference type="PRINTS" id="PR00985">
    <property type="entry name" value="TRNASYNTHLEU"/>
</dbReference>
<dbReference type="SUPFAM" id="SSF47323">
    <property type="entry name" value="Anticodon-binding domain of a subclass of class I aminoacyl-tRNA synthetases"/>
    <property type="match status" value="1"/>
</dbReference>
<dbReference type="SUPFAM" id="SSF52374">
    <property type="entry name" value="Nucleotidylyl transferase"/>
    <property type="match status" value="1"/>
</dbReference>
<dbReference type="SUPFAM" id="SSF50677">
    <property type="entry name" value="ValRS/IleRS/LeuRS editing domain"/>
    <property type="match status" value="1"/>
</dbReference>
<dbReference type="PROSITE" id="PS00178">
    <property type="entry name" value="AA_TRNA_LIGASE_I"/>
    <property type="match status" value="1"/>
</dbReference>
<keyword id="KW-0030">Aminoacyl-tRNA synthetase</keyword>
<keyword id="KW-0067">ATP-binding</keyword>
<keyword id="KW-0963">Cytoplasm</keyword>
<keyword id="KW-0436">Ligase</keyword>
<keyword id="KW-0547">Nucleotide-binding</keyword>
<keyword id="KW-0648">Protein biosynthesis</keyword>
<accession>Q1BZ70</accession>
<comment type="catalytic activity">
    <reaction evidence="1">
        <text>tRNA(Leu) + L-leucine + ATP = L-leucyl-tRNA(Leu) + AMP + diphosphate</text>
        <dbReference type="Rhea" id="RHEA:11688"/>
        <dbReference type="Rhea" id="RHEA-COMP:9613"/>
        <dbReference type="Rhea" id="RHEA-COMP:9622"/>
        <dbReference type="ChEBI" id="CHEBI:30616"/>
        <dbReference type="ChEBI" id="CHEBI:33019"/>
        <dbReference type="ChEBI" id="CHEBI:57427"/>
        <dbReference type="ChEBI" id="CHEBI:78442"/>
        <dbReference type="ChEBI" id="CHEBI:78494"/>
        <dbReference type="ChEBI" id="CHEBI:456215"/>
        <dbReference type="EC" id="6.1.1.4"/>
    </reaction>
</comment>
<comment type="subcellular location">
    <subcellularLocation>
        <location evidence="1">Cytoplasm</location>
    </subcellularLocation>
</comment>
<comment type="similarity">
    <text evidence="1">Belongs to the class-I aminoacyl-tRNA synthetase family.</text>
</comment>
<gene>
    <name evidence="1" type="primary">leuS</name>
    <name type="ordered locus">Bcen_0171</name>
</gene>
<evidence type="ECO:0000255" key="1">
    <source>
        <dbReference type="HAMAP-Rule" id="MF_00049"/>
    </source>
</evidence>
<sequence>MHERYVPADVEAAAQGDWRAADAYKTKEDSQKPKFYCVSMLPYPSGKLHMGHVRNYTINDVMYRYLRMNGYNTLMPMGWDAFGMPAENAAMANGVPPAKWTYDNIDYMKGQMQSMGLAIDWSREIATCKPDYYKWNQWLFLKMLEKGIAYKKTGTVNWDPVDQTVLANEQVIDGRGWRSGALVEKREIPMYYLRITQYADELLNDLDGLGWPERVKIMQQNWIGKSFGVNFGFPYELDGEQKLLRVFTTRADTIMGVTFCAIAAEHPLATRLAQDKPELLAFIEECKRGGVAEADVATMEKKGVATGFSVKHPLTGEPVEVWIGNYVLMSYGEGAVMGVPGHDERDFAFAKKYDLPIRQVIASEGQTYSLDAWQEWYGDKETAVCVNSGKYDGLRYAEAVDAVAADLKAGGFGDKQVTWRLRDWGVSRQRYWGTPIPIIHCPSCGDVPVPEQDLPVVLPEDLVPDGSGNPLAKSEAFLNCTCPKCGAAAKRETDTMDTFVDSSWYFSRYTAPDAETMVDARTDYWMPMDQYIGGIEHAILHLLYSRFWTKVMRDLGLVKFGEPAKNLLTQGMVLNETYYREDAAGKKTWYNPLDVTVTHDDKGRPVGATLNADGQPVVLGGIEKMSKSKNNGVDPQLLIDQYGADTARLFTMFAAPPEQQLEWSGAGVEGASRFLRRVWSFGYGNREALAARAGFDAATLGDADKALRREIYSVLKQADFDYQRLQYNTVVSAAMKMLNAIDGAKGATPAVLRETYGVLLRVLYPVVPHVTFELWKTLGYADEFGALLDAPWPKVDEAALEQAEIELVLQVNGKVRGALKVAKDASRDAIEAAAVADEAFAKFSDGKPAKKIVVVPGRLVNIVV</sequence>
<organism>
    <name type="scientific">Burkholderia orbicola (strain AU 1054)</name>
    <dbReference type="NCBI Taxonomy" id="331271"/>
    <lineage>
        <taxon>Bacteria</taxon>
        <taxon>Pseudomonadati</taxon>
        <taxon>Pseudomonadota</taxon>
        <taxon>Betaproteobacteria</taxon>
        <taxon>Burkholderiales</taxon>
        <taxon>Burkholderiaceae</taxon>
        <taxon>Burkholderia</taxon>
        <taxon>Burkholderia cepacia complex</taxon>
        <taxon>Burkholderia orbicola</taxon>
    </lineage>
</organism>
<protein>
    <recommendedName>
        <fullName evidence="1">Leucine--tRNA ligase</fullName>
        <ecNumber evidence="1">6.1.1.4</ecNumber>
    </recommendedName>
    <alternativeName>
        <fullName evidence="1">Leucyl-tRNA synthetase</fullName>
        <shortName evidence="1">LeuRS</shortName>
    </alternativeName>
</protein>
<reference key="1">
    <citation type="submission" date="2006-05" db="EMBL/GenBank/DDBJ databases">
        <title>Complete sequence of chromosome 1 of Burkholderia cenocepacia AU 1054.</title>
        <authorList>
            <consortium name="US DOE Joint Genome Institute"/>
            <person name="Copeland A."/>
            <person name="Lucas S."/>
            <person name="Lapidus A."/>
            <person name="Barry K."/>
            <person name="Detter J.C."/>
            <person name="Glavina del Rio T."/>
            <person name="Hammon N."/>
            <person name="Israni S."/>
            <person name="Dalin E."/>
            <person name="Tice H."/>
            <person name="Pitluck S."/>
            <person name="Chain P."/>
            <person name="Malfatti S."/>
            <person name="Shin M."/>
            <person name="Vergez L."/>
            <person name="Schmutz J."/>
            <person name="Larimer F."/>
            <person name="Land M."/>
            <person name="Hauser L."/>
            <person name="Kyrpides N."/>
            <person name="Lykidis A."/>
            <person name="LiPuma J.J."/>
            <person name="Konstantinidis K."/>
            <person name="Tiedje J.M."/>
            <person name="Richardson P."/>
        </authorList>
    </citation>
    <scope>NUCLEOTIDE SEQUENCE [LARGE SCALE GENOMIC DNA]</scope>
    <source>
        <strain>AU 1054</strain>
    </source>
</reference>
<feature type="chain" id="PRO_1000009304" description="Leucine--tRNA ligase">
    <location>
        <begin position="1"/>
        <end position="864"/>
    </location>
</feature>
<feature type="short sequence motif" description="'HIGH' region">
    <location>
        <begin position="42"/>
        <end position="52"/>
    </location>
</feature>
<feature type="short sequence motif" description="'KMSKS' region">
    <location>
        <begin position="624"/>
        <end position="628"/>
    </location>
</feature>
<feature type="binding site" evidence="1">
    <location>
        <position position="627"/>
    </location>
    <ligand>
        <name>ATP</name>
        <dbReference type="ChEBI" id="CHEBI:30616"/>
    </ligand>
</feature>